<gene>
    <name evidence="7" type="primary">Ddost</name>
</gene>
<proteinExistence type="evidence at transcript level"/>
<protein>
    <recommendedName>
        <fullName evidence="6">Dolichyl-diphosphooligosaccharide--protein glycosyltransferase 48 kDa subunit</fullName>
        <shortName>DDOST 48 kDa subunit</shortName>
        <shortName>Oligosaccharyl transferase 48 kDa subunit</shortName>
    </recommendedName>
</protein>
<sequence length="441" mass="48896">MKMVPRLAVRAWPLCGLLLAALGCVCASGPRTLVLLDNLNVRDTHSLFFRSLKDRGFELTFKTADDPSLSLIKYGEFLYDNLIIFSPSVEDFGGNINVETISAFIDGGGSVLVAASSDIGDPLRELGSECGIEFDEEKTAVIDHHNYDVSDLGQHTLIVADTENLLKAPTIVGKSSLNPILFRGVGMVADPDNPLVLDILTGSSTSYSFFPDKPITQYPHAVGRNTLLIAGLQARNNARVIFSGSLDFFSDAFFNSAVQKAAPGAQRYSQTGNYELAVALSRWVFKEEGVLRVGPVSHHRVGETAPPNAYTVTDLVEYSIVIEQLSNGKWVPFDGDDIQLEFVRIDPFVRTFLKRKGGKYSVQFKLPDVYGVFQFKVDYNRLGYTHLYSSTQVSVRPLQHTQYERFIPSAYPYYASAFSMMAGLFLFSVVFLHMKEKEKSD</sequence>
<feature type="signal peptide" evidence="1">
    <location>
        <begin position="1"/>
        <end position="28"/>
    </location>
</feature>
<feature type="chain" id="PRO_0000357447" description="Dolichyl-diphosphooligosaccharide--protein glycosyltransferase 48 kDa subunit">
    <location>
        <begin position="29"/>
        <end position="441"/>
    </location>
</feature>
<feature type="topological domain" description="Lumenal" evidence="5">
    <location>
        <begin position="29"/>
        <end position="412"/>
    </location>
</feature>
<feature type="transmembrane region" description="Helical" evidence="5">
    <location>
        <begin position="413"/>
        <end position="432"/>
    </location>
</feature>
<feature type="topological domain" description="Cytoplasmic" evidence="5">
    <location>
        <begin position="433"/>
        <end position="441"/>
    </location>
</feature>
<organism>
    <name type="scientific">Rattus norvegicus</name>
    <name type="common">Rat</name>
    <dbReference type="NCBI Taxonomy" id="10116"/>
    <lineage>
        <taxon>Eukaryota</taxon>
        <taxon>Metazoa</taxon>
        <taxon>Chordata</taxon>
        <taxon>Craniata</taxon>
        <taxon>Vertebrata</taxon>
        <taxon>Euteleostomi</taxon>
        <taxon>Mammalia</taxon>
        <taxon>Eutheria</taxon>
        <taxon>Euarchontoglires</taxon>
        <taxon>Glires</taxon>
        <taxon>Rodentia</taxon>
        <taxon>Myomorpha</taxon>
        <taxon>Muroidea</taxon>
        <taxon>Muridae</taxon>
        <taxon>Murinae</taxon>
        <taxon>Rattus</taxon>
    </lineage>
</organism>
<reference key="1">
    <citation type="journal article" date="2004" name="Genome Res.">
        <title>The status, quality, and expansion of the NIH full-length cDNA project: the Mammalian Gene Collection (MGC).</title>
        <authorList>
            <consortium name="The MGC Project Team"/>
        </authorList>
    </citation>
    <scope>NUCLEOTIDE SEQUENCE [LARGE SCALE MRNA]</scope>
    <source>
        <tissue>Testis</tissue>
    </source>
</reference>
<dbReference type="EMBL" id="BC082075">
    <property type="protein sequence ID" value="AAH82075.1"/>
    <property type="molecule type" value="mRNA"/>
</dbReference>
<dbReference type="RefSeq" id="NP_001012104.1">
    <property type="nucleotide sequence ID" value="NM_001012104.1"/>
</dbReference>
<dbReference type="SMR" id="Q641Y0"/>
<dbReference type="BioGRID" id="260501">
    <property type="interactions" value="1"/>
</dbReference>
<dbReference type="FunCoup" id="Q641Y0">
    <property type="interactions" value="3205"/>
</dbReference>
<dbReference type="IntAct" id="Q641Y0">
    <property type="interactions" value="1"/>
</dbReference>
<dbReference type="STRING" id="10116.ENSRNOP00000062365"/>
<dbReference type="iPTMnet" id="Q641Y0"/>
<dbReference type="PhosphoSitePlus" id="Q641Y0"/>
<dbReference type="SwissPalm" id="Q641Y0"/>
<dbReference type="jPOST" id="Q641Y0"/>
<dbReference type="PaxDb" id="10116-ENSRNOP00000062365"/>
<dbReference type="GeneID" id="313648"/>
<dbReference type="KEGG" id="rno:313648"/>
<dbReference type="UCSC" id="RGD:1308970">
    <property type="organism name" value="rat"/>
</dbReference>
<dbReference type="AGR" id="RGD:1308970"/>
<dbReference type="CTD" id="1650"/>
<dbReference type="RGD" id="1308970">
    <property type="gene designation" value="Ddost"/>
</dbReference>
<dbReference type="VEuPathDB" id="HostDB:ENSRNOG00000015079"/>
<dbReference type="eggNOG" id="KOG2754">
    <property type="taxonomic scope" value="Eukaryota"/>
</dbReference>
<dbReference type="HOGENOM" id="CLU_031804_0_0_1"/>
<dbReference type="InParanoid" id="Q641Y0"/>
<dbReference type="OrthoDB" id="16127at9989"/>
<dbReference type="PhylomeDB" id="Q641Y0"/>
<dbReference type="Reactome" id="R-RNO-6798695">
    <property type="pathway name" value="Neutrophil degranulation"/>
</dbReference>
<dbReference type="UniPathway" id="UPA00378"/>
<dbReference type="PRO" id="PR:Q641Y0"/>
<dbReference type="Proteomes" id="UP000002494">
    <property type="component" value="Chromosome 5"/>
</dbReference>
<dbReference type="Bgee" id="ENSRNOG00000015079">
    <property type="expression patterns" value="Expressed in pancreas and 20 other cell types or tissues"/>
</dbReference>
<dbReference type="GO" id="GO:0043231">
    <property type="term" value="C:intracellular membrane-bounded organelle"/>
    <property type="evidence" value="ECO:0000266"/>
    <property type="project" value="RGD"/>
</dbReference>
<dbReference type="GO" id="GO:0008250">
    <property type="term" value="C:oligosaccharyltransferase complex"/>
    <property type="evidence" value="ECO:0000250"/>
    <property type="project" value="UniProtKB"/>
</dbReference>
<dbReference type="GO" id="GO:0160226">
    <property type="term" value="C:oligosaccharyltransferase complex A"/>
    <property type="evidence" value="ECO:0000266"/>
    <property type="project" value="RGD"/>
</dbReference>
<dbReference type="GO" id="GO:0160227">
    <property type="term" value="C:oligosaccharyltransferase complex B"/>
    <property type="evidence" value="ECO:0000266"/>
    <property type="project" value="RGD"/>
</dbReference>
<dbReference type="GO" id="GO:0005886">
    <property type="term" value="C:plasma membrane"/>
    <property type="evidence" value="ECO:0000304"/>
    <property type="project" value="Reactome"/>
</dbReference>
<dbReference type="GO" id="GO:0008047">
    <property type="term" value="F:enzyme activator activity"/>
    <property type="evidence" value="ECO:0000266"/>
    <property type="project" value="RGD"/>
</dbReference>
<dbReference type="GO" id="GO:0006486">
    <property type="term" value="P:protein glycosylation"/>
    <property type="evidence" value="ECO:0000250"/>
    <property type="project" value="UniProtKB"/>
</dbReference>
<dbReference type="GO" id="GO:0006487">
    <property type="term" value="P:protein N-linked glycosylation"/>
    <property type="evidence" value="ECO:0000266"/>
    <property type="project" value="RGD"/>
</dbReference>
<dbReference type="GO" id="GO:0018279">
    <property type="term" value="P:protein N-linked glycosylation via asparagine"/>
    <property type="evidence" value="ECO:0000266"/>
    <property type="project" value="RGD"/>
</dbReference>
<dbReference type="GO" id="GO:0031647">
    <property type="term" value="P:regulation of protein stability"/>
    <property type="evidence" value="ECO:0000266"/>
    <property type="project" value="RGD"/>
</dbReference>
<dbReference type="GO" id="GO:0034097">
    <property type="term" value="P:response to cytokine"/>
    <property type="evidence" value="ECO:0000266"/>
    <property type="project" value="RGD"/>
</dbReference>
<dbReference type="GO" id="GO:0042110">
    <property type="term" value="P:T cell activation"/>
    <property type="evidence" value="ECO:0000266"/>
    <property type="project" value="RGD"/>
</dbReference>
<dbReference type="InterPro" id="IPR005013">
    <property type="entry name" value="DDOST_48_kDa_subunit"/>
</dbReference>
<dbReference type="InterPro" id="IPR055459">
    <property type="entry name" value="OST48_MD"/>
</dbReference>
<dbReference type="InterPro" id="IPR055457">
    <property type="entry name" value="OST48_N"/>
</dbReference>
<dbReference type="PANTHER" id="PTHR10830">
    <property type="entry name" value="DOLICHYL-DIPHOSPHOOLIGOSACCHARIDE--PROTEIN GLYCOSYLTRANSFERASE 48 KDA SUBUNIT"/>
    <property type="match status" value="1"/>
</dbReference>
<dbReference type="PANTHER" id="PTHR10830:SF0">
    <property type="entry name" value="DOLICHYL-DIPHOSPHOOLIGOSACCHARIDE--PROTEIN GLYCOSYLTRANSFERASE 48 KDA SUBUNIT"/>
    <property type="match status" value="1"/>
</dbReference>
<dbReference type="Pfam" id="PF23358">
    <property type="entry name" value="OST48_MD"/>
    <property type="match status" value="1"/>
</dbReference>
<dbReference type="Pfam" id="PF03345">
    <property type="entry name" value="OST48_N"/>
    <property type="match status" value="1"/>
</dbReference>
<name>OST48_RAT</name>
<keyword id="KW-0256">Endoplasmic reticulum</keyword>
<keyword id="KW-0472">Membrane</keyword>
<keyword id="KW-1185">Reference proteome</keyword>
<keyword id="KW-0732">Signal</keyword>
<keyword id="KW-0812">Transmembrane</keyword>
<keyword id="KW-1133">Transmembrane helix</keyword>
<accession>Q641Y0</accession>
<comment type="function">
    <text evidence="2 3">Subunit of the oligosaccharyl transferase (OST) complex that catalyzes the initial transfer of a defined glycan (Glc(3)Man(9)GlcNAc(2) in eukaryotes) from the lipid carrier dolichol-pyrophosphate to an asparagine residue within an Asn-X-Ser/Thr consensus motif in nascent polypeptide chains, the first step in protein N-glycosylation (By similarity). N-glycosylation occurs cotranslationally and the complex associates with the Sec61 complex at the channel-forming translocon complex that mediates protein translocation across the endoplasmic reticulum (ER). All subunits are required for a maximal enzyme activity (By similarity). Required for the assembly of both SST3A- and SS3B-containing OST complexes (By similarity).</text>
</comment>
<comment type="pathway">
    <text evidence="2">Protein modification; protein glycosylation.</text>
</comment>
<comment type="subunit">
    <text evidence="2 3">Component of the oligosaccharyltransferase (OST) complex (By similarity). OST exists in two different complex forms which contain common core subunits RPN1, RPN2, OST48, OST4, DAD1 and TMEM258, either STT3A or STT3B as catalytic subunits, and form-specific accessory subunits (By similarity). STT3A complex assembly occurs through the formation of 3 subcomplexes. Subcomplex 1 contains RPN1 and TMEM258, subcomplex 2 contains the STT3A-specific subunits STT3A, DC2/OSTC, and KCP2 as well as the core subunit OST4, and subcomplex 3 contains RPN2, DAD1, and OST48. The STT3A complex can form stable complexes with the Sec61 complex or with both the Sec61 and TRAP complexes. Interacts with SMIM22 (By similarity).</text>
</comment>
<comment type="subcellular location">
    <subcellularLocation>
        <location evidence="4">Endoplasmic reticulum membrane</location>
        <topology evidence="4">Single-pass type I membrane protein</topology>
    </subcellularLocation>
</comment>
<comment type="similarity">
    <text evidence="6">Belongs to the DDOST 48 kDa subunit family.</text>
</comment>
<evidence type="ECO:0000250" key="1"/>
<evidence type="ECO:0000250" key="2">
    <source>
        <dbReference type="UniProtKB" id="P39656"/>
    </source>
</evidence>
<evidence type="ECO:0000250" key="3">
    <source>
        <dbReference type="UniProtKB" id="Q05052"/>
    </source>
</evidence>
<evidence type="ECO:0000250" key="4">
    <source>
        <dbReference type="UniProtKB" id="Q29381"/>
    </source>
</evidence>
<evidence type="ECO:0000255" key="5"/>
<evidence type="ECO:0000305" key="6"/>
<evidence type="ECO:0000312" key="7">
    <source>
        <dbReference type="RGD" id="1308970"/>
    </source>
</evidence>